<gene>
    <name type="ordered locus">PG_1874</name>
</gene>
<reference key="1">
    <citation type="journal article" date="2003" name="J. Bacteriol.">
        <title>Complete genome sequence of the oral pathogenic bacterium Porphyromonas gingivalis strain W83.</title>
        <authorList>
            <person name="Nelson K.E."/>
            <person name="Fleischmann R.D."/>
            <person name="DeBoy R.T."/>
            <person name="Paulsen I.T."/>
            <person name="Fouts D.E."/>
            <person name="Eisen J.A."/>
            <person name="Daugherty S.C."/>
            <person name="Dodson R.J."/>
            <person name="Durkin A.S."/>
            <person name="Gwinn M.L."/>
            <person name="Haft D.H."/>
            <person name="Kolonay J.F."/>
            <person name="Nelson W.C."/>
            <person name="Mason T.M."/>
            <person name="Tallon L."/>
            <person name="Gray J."/>
            <person name="Granger D."/>
            <person name="Tettelin H."/>
            <person name="Dong H."/>
            <person name="Galvin J.L."/>
            <person name="Duncan M.J."/>
            <person name="Dewhirst F.E."/>
            <person name="Fraser C.M."/>
        </authorList>
    </citation>
    <scope>NUCLEOTIDE SEQUENCE [LARGE SCALE GENOMIC DNA]</scope>
    <source>
        <strain>ATCC BAA-308 / W83</strain>
    </source>
</reference>
<dbReference type="EMBL" id="AE015924">
    <property type="protein sequence ID" value="AAQ66860.1"/>
    <property type="molecule type" value="Genomic_DNA"/>
</dbReference>
<dbReference type="RefSeq" id="WP_004583537.1">
    <property type="nucleotide sequence ID" value="NC_002950.2"/>
</dbReference>
<dbReference type="SMR" id="Q7MTS0"/>
<dbReference type="STRING" id="242619.PG_1874"/>
<dbReference type="EnsemblBacteria" id="AAQ66860">
    <property type="protein sequence ID" value="AAQ66860"/>
    <property type="gene ID" value="PG_1874"/>
</dbReference>
<dbReference type="GeneID" id="29256956"/>
<dbReference type="KEGG" id="pgi:PG_1874"/>
<dbReference type="eggNOG" id="COG0792">
    <property type="taxonomic scope" value="Bacteria"/>
</dbReference>
<dbReference type="HOGENOM" id="CLU_115353_2_1_10"/>
<dbReference type="Proteomes" id="UP000000588">
    <property type="component" value="Chromosome"/>
</dbReference>
<dbReference type="GO" id="GO:0003676">
    <property type="term" value="F:nucleic acid binding"/>
    <property type="evidence" value="ECO:0007669"/>
    <property type="project" value="InterPro"/>
</dbReference>
<dbReference type="Gene3D" id="3.40.1350.10">
    <property type="match status" value="1"/>
</dbReference>
<dbReference type="HAMAP" id="MF_00048">
    <property type="entry name" value="UPF0102"/>
    <property type="match status" value="1"/>
</dbReference>
<dbReference type="InterPro" id="IPR011335">
    <property type="entry name" value="Restrct_endonuc-II-like"/>
</dbReference>
<dbReference type="InterPro" id="IPR011856">
    <property type="entry name" value="tRNA_endonuc-like_dom_sf"/>
</dbReference>
<dbReference type="InterPro" id="IPR003509">
    <property type="entry name" value="UPF0102_YraN-like"/>
</dbReference>
<dbReference type="PANTHER" id="PTHR34039">
    <property type="entry name" value="UPF0102 PROTEIN YRAN"/>
    <property type="match status" value="1"/>
</dbReference>
<dbReference type="PANTHER" id="PTHR34039:SF1">
    <property type="entry name" value="UPF0102 PROTEIN YRAN"/>
    <property type="match status" value="1"/>
</dbReference>
<dbReference type="Pfam" id="PF02021">
    <property type="entry name" value="UPF0102"/>
    <property type="match status" value="1"/>
</dbReference>
<dbReference type="SUPFAM" id="SSF52980">
    <property type="entry name" value="Restriction endonuclease-like"/>
    <property type="match status" value="1"/>
</dbReference>
<proteinExistence type="inferred from homology"/>
<evidence type="ECO:0000255" key="1">
    <source>
        <dbReference type="HAMAP-Rule" id="MF_00048"/>
    </source>
</evidence>
<sequence>MADHNDRGRQGEEIALKHLRQQGYQIEALNWQSGRRELDIVASTSRELVVVEVKTRTEGFLLAPEEAVDARKRRLISESAHHYVRMYAIDLPVRFDVISVVLSADGSCKRIEHRENAFPLLLKRSQRSTPRRRRL</sequence>
<protein>
    <recommendedName>
        <fullName evidence="1">UPF0102 protein PG_1874</fullName>
    </recommendedName>
</protein>
<name>Y1874_PORGI</name>
<comment type="similarity">
    <text evidence="1">Belongs to the UPF0102 family.</text>
</comment>
<keyword id="KW-1185">Reference proteome</keyword>
<accession>Q7MTS0</accession>
<organism>
    <name type="scientific">Porphyromonas gingivalis (strain ATCC BAA-308 / W83)</name>
    <dbReference type="NCBI Taxonomy" id="242619"/>
    <lineage>
        <taxon>Bacteria</taxon>
        <taxon>Pseudomonadati</taxon>
        <taxon>Bacteroidota</taxon>
        <taxon>Bacteroidia</taxon>
        <taxon>Bacteroidales</taxon>
        <taxon>Porphyromonadaceae</taxon>
        <taxon>Porphyromonas</taxon>
    </lineage>
</organism>
<feature type="chain" id="PRO_1000009243" description="UPF0102 protein PG_1874">
    <location>
        <begin position="1"/>
        <end position="135"/>
    </location>
</feature>